<proteinExistence type="inferred from homology"/>
<evidence type="ECO:0000255" key="1">
    <source>
        <dbReference type="HAMAP-Rule" id="MF_00135"/>
    </source>
</evidence>
<comment type="catalytic activity">
    <reaction evidence="1">
        <text>N-(5-phospho-beta-D-ribosyl)anthranilate = 1-(2-carboxyphenylamino)-1-deoxy-D-ribulose 5-phosphate</text>
        <dbReference type="Rhea" id="RHEA:21540"/>
        <dbReference type="ChEBI" id="CHEBI:18277"/>
        <dbReference type="ChEBI" id="CHEBI:58613"/>
        <dbReference type="EC" id="5.3.1.24"/>
    </reaction>
</comment>
<comment type="pathway">
    <text evidence="1">Amino-acid biosynthesis; L-tryptophan biosynthesis; L-tryptophan from chorismate: step 3/5.</text>
</comment>
<comment type="similarity">
    <text evidence="1">Belongs to the TrpF family.</text>
</comment>
<keyword id="KW-0028">Amino-acid biosynthesis</keyword>
<keyword id="KW-0057">Aromatic amino acid biosynthesis</keyword>
<keyword id="KW-0413">Isomerase</keyword>
<keyword id="KW-0822">Tryptophan biosynthesis</keyword>
<name>TRPF_STAAM</name>
<accession>P67005</accession>
<accession>Q99UB0</accession>
<gene>
    <name evidence="1" type="primary">trpF</name>
    <name type="ordered locus">SAV1371</name>
</gene>
<protein>
    <recommendedName>
        <fullName evidence="1">N-(5'-phosphoribosyl)anthranilate isomerase</fullName>
        <shortName evidence="1">PRAI</shortName>
        <ecNumber evidence="1">5.3.1.24</ecNumber>
    </recommendedName>
</protein>
<organism>
    <name type="scientific">Staphylococcus aureus (strain Mu50 / ATCC 700699)</name>
    <dbReference type="NCBI Taxonomy" id="158878"/>
    <lineage>
        <taxon>Bacteria</taxon>
        <taxon>Bacillati</taxon>
        <taxon>Bacillota</taxon>
        <taxon>Bacilli</taxon>
        <taxon>Bacillales</taxon>
        <taxon>Staphylococcaceae</taxon>
        <taxon>Staphylococcus</taxon>
    </lineage>
</organism>
<reference key="1">
    <citation type="journal article" date="2001" name="Lancet">
        <title>Whole genome sequencing of meticillin-resistant Staphylococcus aureus.</title>
        <authorList>
            <person name="Kuroda M."/>
            <person name="Ohta T."/>
            <person name="Uchiyama I."/>
            <person name="Baba T."/>
            <person name="Yuzawa H."/>
            <person name="Kobayashi I."/>
            <person name="Cui L."/>
            <person name="Oguchi A."/>
            <person name="Aoki K."/>
            <person name="Nagai Y."/>
            <person name="Lian J.-Q."/>
            <person name="Ito T."/>
            <person name="Kanamori M."/>
            <person name="Matsumaru H."/>
            <person name="Maruyama A."/>
            <person name="Murakami H."/>
            <person name="Hosoyama A."/>
            <person name="Mizutani-Ui Y."/>
            <person name="Takahashi N.K."/>
            <person name="Sawano T."/>
            <person name="Inoue R."/>
            <person name="Kaito C."/>
            <person name="Sekimizu K."/>
            <person name="Hirakawa H."/>
            <person name="Kuhara S."/>
            <person name="Goto S."/>
            <person name="Yabuzaki J."/>
            <person name="Kanehisa M."/>
            <person name="Yamashita A."/>
            <person name="Oshima K."/>
            <person name="Furuya K."/>
            <person name="Yoshino C."/>
            <person name="Shiba T."/>
            <person name="Hattori M."/>
            <person name="Ogasawara N."/>
            <person name="Hayashi H."/>
            <person name="Hiramatsu K."/>
        </authorList>
    </citation>
    <scope>NUCLEOTIDE SEQUENCE [LARGE SCALE GENOMIC DNA]</scope>
    <source>
        <strain>Mu50 / ATCC 700699</strain>
    </source>
</reference>
<feature type="chain" id="PRO_0000154377" description="N-(5'-phosphoribosyl)anthranilate isomerase">
    <location>
        <begin position="1"/>
        <end position="210"/>
    </location>
</feature>
<dbReference type="EC" id="5.3.1.24" evidence="1"/>
<dbReference type="EMBL" id="BA000017">
    <property type="protein sequence ID" value="BAB57533.1"/>
    <property type="molecule type" value="Genomic_DNA"/>
</dbReference>
<dbReference type="RefSeq" id="WP_000768192.1">
    <property type="nucleotide sequence ID" value="NC_002758.2"/>
</dbReference>
<dbReference type="SMR" id="P67005"/>
<dbReference type="KEGG" id="sav:SAV1371"/>
<dbReference type="HOGENOM" id="CLU_076364_1_1_9"/>
<dbReference type="PhylomeDB" id="P67005"/>
<dbReference type="UniPathway" id="UPA00035">
    <property type="reaction ID" value="UER00042"/>
</dbReference>
<dbReference type="Proteomes" id="UP000002481">
    <property type="component" value="Chromosome"/>
</dbReference>
<dbReference type="GO" id="GO:0004640">
    <property type="term" value="F:phosphoribosylanthranilate isomerase activity"/>
    <property type="evidence" value="ECO:0007669"/>
    <property type="project" value="UniProtKB-UniRule"/>
</dbReference>
<dbReference type="GO" id="GO:0000162">
    <property type="term" value="P:L-tryptophan biosynthetic process"/>
    <property type="evidence" value="ECO:0007669"/>
    <property type="project" value="UniProtKB-UniRule"/>
</dbReference>
<dbReference type="CDD" id="cd00405">
    <property type="entry name" value="PRAI"/>
    <property type="match status" value="1"/>
</dbReference>
<dbReference type="FunFam" id="3.20.20.70:FF:000277">
    <property type="entry name" value="Phosphoribosylanthranilate isomerase"/>
    <property type="match status" value="1"/>
</dbReference>
<dbReference type="Gene3D" id="3.20.20.70">
    <property type="entry name" value="Aldolase class I"/>
    <property type="match status" value="1"/>
</dbReference>
<dbReference type="HAMAP" id="MF_00135">
    <property type="entry name" value="PRAI"/>
    <property type="match status" value="1"/>
</dbReference>
<dbReference type="InterPro" id="IPR013785">
    <property type="entry name" value="Aldolase_TIM"/>
</dbReference>
<dbReference type="InterPro" id="IPR001240">
    <property type="entry name" value="PRAI_dom"/>
</dbReference>
<dbReference type="InterPro" id="IPR011060">
    <property type="entry name" value="RibuloseP-bd_barrel"/>
</dbReference>
<dbReference type="InterPro" id="IPR044643">
    <property type="entry name" value="TrpF_fam"/>
</dbReference>
<dbReference type="NCBIfam" id="NF010563">
    <property type="entry name" value="PRK13958.1"/>
    <property type="match status" value="1"/>
</dbReference>
<dbReference type="PANTHER" id="PTHR42894">
    <property type="entry name" value="N-(5'-PHOSPHORIBOSYL)ANTHRANILATE ISOMERASE"/>
    <property type="match status" value="1"/>
</dbReference>
<dbReference type="PANTHER" id="PTHR42894:SF1">
    <property type="entry name" value="N-(5'-PHOSPHORIBOSYL)ANTHRANILATE ISOMERASE"/>
    <property type="match status" value="1"/>
</dbReference>
<dbReference type="Pfam" id="PF00697">
    <property type="entry name" value="PRAI"/>
    <property type="match status" value="1"/>
</dbReference>
<dbReference type="SUPFAM" id="SSF51366">
    <property type="entry name" value="Ribulose-phoshate binding barrel"/>
    <property type="match status" value="1"/>
</dbReference>
<sequence length="210" mass="23389">MKLKFCGFTSIKDVTAASQLPIDAIGFIHYEKSKRHQTITQIKKLASAVPNHIDKVCVMVNPDLTTIEHVLSNTSINTIQLHGTESIDFIQEIKKKYSSIKITKALAADENIIQNINKYKGFVDLFIIDTPSVSYGGTGQTYDWTILKHIKDIPYLIAGGINSENIQTVNQLKLSHQGYDLASGIEVNGRKDIEKMTAIVNIVKGDRDNE</sequence>